<keyword id="KW-0106">Calcium</keyword>
<keyword id="KW-0903">Direct protein sequencing</keyword>
<keyword id="KW-0378">Hydrolase</keyword>
<keyword id="KW-0479">Metal-binding</keyword>
<keyword id="KW-0482">Metalloprotease</keyword>
<keyword id="KW-0645">Protease</keyword>
<keyword id="KW-0964">Secreted</keyword>
<keyword id="KW-0732">Signal</keyword>
<keyword id="KW-0843">Virulence</keyword>
<keyword id="KW-0862">Zinc</keyword>
<keyword id="KW-0865">Zymogen</keyword>
<organism>
    <name type="scientific">Bacillus thuringiensis subsp. alesti</name>
    <dbReference type="NCBI Taxonomy" id="1440"/>
    <lineage>
        <taxon>Bacteria</taxon>
        <taxon>Bacillati</taxon>
        <taxon>Bacillota</taxon>
        <taxon>Bacilli</taxon>
        <taxon>Bacillales</taxon>
        <taxon>Bacillaceae</taxon>
        <taxon>Bacillus</taxon>
        <taxon>Bacillus cereus group</taxon>
    </lineage>
</organism>
<proteinExistence type="evidence at protein level"/>
<feature type="signal peptide" description="Or 32">
    <location>
        <begin position="1"/>
        <end position="25" status="uncertain"/>
    </location>
</feature>
<feature type="propeptide" id="PRO_0000028642" evidence="1">
    <location>
        <begin position="26" status="uncertain"/>
        <end position="40"/>
    </location>
</feature>
<feature type="chain" id="PRO_0000028643" description="Immune inhibitor A">
    <location>
        <begin position="41"/>
        <end position="687"/>
    </location>
</feature>
<feature type="region of interest" description="Disordered" evidence="3">
    <location>
        <begin position="1"/>
        <end position="43"/>
    </location>
</feature>
<feature type="compositionally biased region" description="Basic and acidic residues" evidence="3">
    <location>
        <begin position="1"/>
        <end position="12"/>
    </location>
</feature>
<feature type="active site" evidence="2">
    <location>
        <position position="267"/>
    </location>
</feature>
<feature type="binding site" evidence="2">
    <location>
        <position position="266"/>
    </location>
    <ligand>
        <name>Zn(2+)</name>
        <dbReference type="ChEBI" id="CHEBI:29105"/>
        <note>catalytic</note>
    </ligand>
</feature>
<feature type="binding site" evidence="2">
    <location>
        <position position="270"/>
    </location>
    <ligand>
        <name>Zn(2+)</name>
        <dbReference type="ChEBI" id="CHEBI:29105"/>
        <note>catalytic</note>
    </ligand>
</feature>
<evidence type="ECO:0000255" key="1"/>
<evidence type="ECO:0000255" key="2">
    <source>
        <dbReference type="PROSITE-ProRule" id="PRU10095"/>
    </source>
</evidence>
<evidence type="ECO:0000256" key="3">
    <source>
        <dbReference type="SAM" id="MobiDB-lite"/>
    </source>
</evidence>
<evidence type="ECO:0000305" key="4"/>
<name>INA_BACTL</name>
<sequence length="687" mass="75010">MKDAKADTKEKLNQPATGTPAATGPVKGGLNGKVPTSPAKQKAYNGDVRKDKVLVLLVEYADFKHNNIDKEPGYMYSEDFNKEHYEKMLYGDEPFALEDGSKIETFKQYYEEQSGGSYTVDGTVTKWLTVPGKAADYGADAATGHDNKGPKGPRDLVKDALKAAVDSGLDLSQFDQFDQYDVNGDGNQNQPDGLIDHLMIIHAGVGQEAGGGKLGDDAIWSHRWTVGPKPFAIEGTQAKVPYWGGKMAAFDYTIEPEDGAVGVNAHEYGHDLGLPDEYDTDYTGHGEPIQAWSVMSGGTWAGKIAGTTPTSFSPQNKEFFQKTIGGNWANIVEVDYEKLNKGIGLATYLDQSVTKSNRPGMIRVNLPDKDVKTIRPAFGKQYYYSTKGDNLHTTLETPLFDLTNATNAKFDFKSLYEIEAEYDFLEVHAVTEDGQKTLIERLGEKANSGNAEATNGKWIDKSYDLSQFKGKKVKLTFEYITDGGLALNGGLLDNASLTVDGKVTFSDDAEGTPQLKLDGFVVSSGTEKKKHNYYVEWRNHTGSDSALKFARGPEYNSGMVVWYADSAYADNWVGLHPGHGFLGVVDSHPEAIVGTLNGKPTIDSSTRFQIADAAFSFDKTPAWKVVSPTRGTYTYDGLAGVAKFDDSKTYINQQIPDAGRILPKLGLKFEVVGQADDNSAGAVRLYR</sequence>
<reference key="1">
    <citation type="journal article" date="1990" name="Mol. Microbiol.">
        <title>Molecular characterization of immune inhibitor A, a secreted virulence protease from Bacillus thuringiensis.</title>
        <authorList>
            <person name="Loevgren A."/>
            <person name="Zhang M."/>
            <person name="Engstroem A."/>
            <person name="Dalhammar G."/>
            <person name="Landen R."/>
        </authorList>
    </citation>
    <scope>NUCLEOTIDE SEQUENCE [GENOMIC DNA]</scope>
    <scope>PROTEIN SEQUENCE OF 47-87 AND 200-242</scope>
    <source>
        <strain>BT75 / Serotype 3A</strain>
    </source>
</reference>
<reference key="2">
    <citation type="journal article" date="1984" name="Eur. J. Biochem.">
        <title>Characterization of inhibitor A, a protease from Bacillus thuringiensis which degrades attacins and cecropins, two classes of antibacterial proteins in insects.</title>
        <authorList>
            <person name="Dalhammar G."/>
            <person name="Steiner H."/>
        </authorList>
    </citation>
    <scope>PARTIAL PROTEIN SEQUENCE</scope>
    <scope>CHARACTERIZATION</scope>
    <source>
        <strain>BT75 / Serotype 3A</strain>
    </source>
</reference>
<comment type="function">
    <text>Neutral metalloprotease that is secreted to degrade antibacterial proteins produced by the insect host for its defense (attacins and cecropins). Probably degrades some unknown crucial protein(s) too, since it is toxic when injected to insect larvae.</text>
</comment>
<comment type="cofactor">
    <cofactor evidence="4">
        <name>Zn(2+)</name>
        <dbReference type="ChEBI" id="CHEBI:29105"/>
    </cofactor>
</comment>
<comment type="cofactor">
    <cofactor evidence="4">
        <name>Ca(2+)</name>
        <dbReference type="ChEBI" id="CHEBI:29108"/>
    </cofactor>
</comment>
<comment type="subcellular location">
    <subcellularLocation>
        <location>Secreted</location>
    </subcellularLocation>
</comment>
<comment type="similarity">
    <text evidence="4">Belongs to the peptidase M6 family.</text>
</comment>
<dbReference type="EC" id="3.4.24.-"/>
<dbReference type="EMBL" id="X55436">
    <property type="protein sequence ID" value="CAA39079.1"/>
    <property type="molecule type" value="Genomic_DNA"/>
</dbReference>
<dbReference type="PIR" id="S12399">
    <property type="entry name" value="S12399"/>
</dbReference>
<dbReference type="SMR" id="P23382"/>
<dbReference type="MEROPS" id="M06.001"/>
<dbReference type="GO" id="GO:0005576">
    <property type="term" value="C:extracellular region"/>
    <property type="evidence" value="ECO:0007669"/>
    <property type="project" value="UniProtKB-SubCell"/>
</dbReference>
<dbReference type="GO" id="GO:0046872">
    <property type="term" value="F:metal ion binding"/>
    <property type="evidence" value="ECO:0007669"/>
    <property type="project" value="UniProtKB-KW"/>
</dbReference>
<dbReference type="GO" id="GO:0008237">
    <property type="term" value="F:metallopeptidase activity"/>
    <property type="evidence" value="ECO:0007669"/>
    <property type="project" value="UniProtKB-KW"/>
</dbReference>
<dbReference type="GO" id="GO:0006508">
    <property type="term" value="P:proteolysis"/>
    <property type="evidence" value="ECO:0007669"/>
    <property type="project" value="UniProtKB-KW"/>
</dbReference>
<dbReference type="InterPro" id="IPR048665">
    <property type="entry name" value="InhA-like_VEG"/>
</dbReference>
<dbReference type="InterPro" id="IPR012300">
    <property type="entry name" value="Pept_M6_InhA"/>
</dbReference>
<dbReference type="InterPro" id="IPR008757">
    <property type="entry name" value="Peptidase_M6-like_domain"/>
</dbReference>
<dbReference type="NCBIfam" id="TIGR03296">
    <property type="entry name" value="M6dom_TIGR03296"/>
    <property type="match status" value="1"/>
</dbReference>
<dbReference type="PANTHER" id="PTHR13062:SF12">
    <property type="entry name" value="ALPHA-2-MACROGLOBULIN DOMAIN-CONTAINING PROTEIN"/>
    <property type="match status" value="1"/>
</dbReference>
<dbReference type="PANTHER" id="PTHR13062">
    <property type="entry name" value="COLLAGENASE"/>
    <property type="match status" value="1"/>
</dbReference>
<dbReference type="Pfam" id="PF20773">
    <property type="entry name" value="InhA-like_MAM"/>
    <property type="match status" value="1"/>
</dbReference>
<dbReference type="Pfam" id="PF20774">
    <property type="entry name" value="InhA-like_VEG"/>
    <property type="match status" value="1"/>
</dbReference>
<dbReference type="Pfam" id="PF05547">
    <property type="entry name" value="Peptidase_M6"/>
    <property type="match status" value="1"/>
</dbReference>
<dbReference type="PIRSF" id="PIRSF007519">
    <property type="entry name" value="Protease_InhA"/>
    <property type="match status" value="1"/>
</dbReference>
<dbReference type="SUPFAM" id="SSF55486">
    <property type="entry name" value="Metalloproteases ('zincins'), catalytic domain"/>
    <property type="match status" value="1"/>
</dbReference>
<dbReference type="PROSITE" id="PS00142">
    <property type="entry name" value="ZINC_PROTEASE"/>
    <property type="match status" value="1"/>
</dbReference>
<gene>
    <name type="primary">ina</name>
</gene>
<accession>P23382</accession>
<protein>
    <recommendedName>
        <fullName>Immune inhibitor A</fullName>
        <ecNumber>3.4.24.-</ecNumber>
    </recommendedName>
</protein>